<proteinExistence type="evidence at protein level"/>
<gene>
    <name evidence="16" type="primary">Brca2</name>
    <name type="ORF">CG30169</name>
</gene>
<protein>
    <recommendedName>
        <fullName evidence="9">Breast cancer type 2 susceptibility protein homolog</fullName>
        <shortName evidence="9">dmbrca2</shortName>
    </recommendedName>
</protein>
<sequence>MDQNGASGSHPNRLSQGRGAHARERGATVSAAANRSNIIDEMAKICEADRQTFAIARRTRGHERLAVDNSDFVAVEDLILSYAEPTPEDQVEMIMSDFCSSPTYAEDEDEPSHESEPWFRFRNKRIRTYSRKRDPKSHKAVQNEKRRGSSGLSVQRDLNTSFTSMACDFDASSQKIHEVLLNLSQYFSATATASGPTPVPSQIDLPTEARQDSGDECFNAELENLRDDLLQSGFTFEASFYENEHEQEGPGTMADTIYGDSMQSVPTTRLRLESGKRNVWSDADSTLKKADVEIAENKKLLMGQTQAKNVDIEENTNFILEGIPLSEWLTPMELPEISKDVIKHIPDKKLKLEPSSQKEQKSSKDSNASKVRGASKQSCDINTKNEGTTILDQPNAAEQENLLNDGELLEEFLFNDWQPMQCSNGPSTSKNAIQGPKENINSINLDDKEQPEKQTPNKSQTISSHQLNGIRKKSFKFIEVSEEMKIKGEEFVDKVVSGLYHFSHKCNLRTEEYSDNHSQVMESTQCAEFKSAPSKPIEILDGKETYNAIAKVDVGEINGKFSPLNNDTIAEPEFCGFRTASNKAIPISEKMKIKTAEFMAEFQSKETIQQNDYLVHQPNDKPTSVGLDTALKRSIESSEEMRSKASKLVVVDTTMREPHQPTLDPVCRDLNESQFFGFRTASNKAIEITEAMEKRGAMFLAQSKATDQLNGWQPSDFPDVLPTSPNNEIHSINVENNKAVNTKTVSETEFFGFRTASNKGIVISENTKIKVAQFMSEFQAADASTDSNQPTVISEESRNIDAKFVDEAAAEDSANKPTFCNVQSLKNTSDIEHFKHDFFVEHSAKEEHPLCSQPLVRTPRRSQEIHSSLSQLAGKSPLDQATKKSVIARRNLLSLKRKRKIILSTETSTSCALPTMERFAPKPSSTSTPLADRDLNRSKDCTKNRQDAEDMSPICMQPKKSRRLGLSRSRY</sequence>
<feature type="chain" id="PRO_0000392916" description="Breast cancer type 2 susceptibility protein homolog">
    <location>
        <begin position="1"/>
        <end position="971"/>
    </location>
</feature>
<feature type="repeat" description="BRCA2 1" evidence="1">
    <location>
        <begin position="570"/>
        <end position="604"/>
    </location>
</feature>
<feature type="repeat" description="BRCA2 2" evidence="1">
    <location>
        <begin position="671"/>
        <end position="705"/>
    </location>
</feature>
<feature type="repeat" description="BRCA2 3" evidence="1">
    <location>
        <begin position="746"/>
        <end position="780"/>
    </location>
</feature>
<feature type="region of interest" description="Disordered" evidence="2">
    <location>
        <begin position="1"/>
        <end position="30"/>
    </location>
</feature>
<feature type="region of interest" description="Disordered" evidence="2">
    <location>
        <begin position="130"/>
        <end position="155"/>
    </location>
</feature>
<feature type="region of interest" description="Disordered" evidence="2">
    <location>
        <begin position="349"/>
        <end position="395"/>
    </location>
</feature>
<feature type="region of interest" description="Disordered" evidence="2">
    <location>
        <begin position="420"/>
        <end position="466"/>
    </location>
</feature>
<feature type="region of interest" description="Disordered" evidence="2">
    <location>
        <begin position="916"/>
        <end position="971"/>
    </location>
</feature>
<feature type="compositionally biased region" description="Polar residues" evidence="2">
    <location>
        <begin position="1"/>
        <end position="15"/>
    </location>
</feature>
<feature type="compositionally biased region" description="Basic residues" evidence="2">
    <location>
        <begin position="130"/>
        <end position="139"/>
    </location>
</feature>
<feature type="compositionally biased region" description="Basic and acidic residues" evidence="2">
    <location>
        <begin position="349"/>
        <end position="364"/>
    </location>
</feature>
<feature type="compositionally biased region" description="Polar residues" evidence="2">
    <location>
        <begin position="375"/>
        <end position="392"/>
    </location>
</feature>
<feature type="compositionally biased region" description="Polar residues" evidence="2">
    <location>
        <begin position="420"/>
        <end position="432"/>
    </location>
</feature>
<feature type="compositionally biased region" description="Polar residues" evidence="2">
    <location>
        <begin position="453"/>
        <end position="466"/>
    </location>
</feature>
<feature type="compositionally biased region" description="Basic and acidic residues" evidence="2">
    <location>
        <begin position="931"/>
        <end position="948"/>
    </location>
</feature>
<feature type="compositionally biased region" description="Basic residues" evidence="2">
    <location>
        <begin position="959"/>
        <end position="971"/>
    </location>
</feature>
<feature type="sequence variant" description="In strain: Zimbabwe30." evidence="8">
    <original>E</original>
    <variation>K</variation>
    <location>
        <position position="242"/>
    </location>
</feature>
<feature type="sequence conflict" description="In Ref. 5; AAM51132." evidence="10" ref="5">
    <original>F</original>
    <variation>S</variation>
    <location>
        <position position="502"/>
    </location>
</feature>
<feature type="sequence conflict" description="In Ref. 5; AAM51132." evidence="10" ref="5">
    <original>D</original>
    <variation>E</variation>
    <location>
        <position position="567"/>
    </location>
</feature>
<feature type="sequence conflict" description="In Ref. 5; AAM51132." evidence="10" ref="5">
    <original>K</original>
    <variation>Y</variation>
    <location>
        <position position="621"/>
    </location>
</feature>
<feature type="sequence conflict" description="In Ref. 5; AAM51132." evidence="10" ref="5">
    <original>V</original>
    <variation>D</variation>
    <location>
        <position position="650"/>
    </location>
</feature>
<feature type="sequence conflict" description="In Ref. 5; AAM51132." evidence="10" ref="5">
    <original>T</original>
    <variation>I</variation>
    <location>
        <position position="791"/>
    </location>
</feature>
<comment type="function">
    <text evidence="4 5">Involved in and required for double-strand break repair by meiotic and mitotic homologous recombination. During meiosis, has a dual role in the repair of meiotic double-stranded breaks and the efficient activation of the meiotic recombination checkpoint.</text>
</comment>
<comment type="subunit">
    <text evidence="4 5 7">Interacts with Rad9 (PubMed:18266476). Interacts with spn-A/Rad51 (PubMed:17822964). Interacts with cyclin CycG (PubMed:22976300).</text>
</comment>
<comment type="subcellular location">
    <subcellularLocation>
        <location evidence="4">Nucleus</location>
    </subcellularLocation>
    <text evidence="4">Brca2 and spn-A/Rad51 become recruited to nuclear foci after DNA damage.</text>
</comment>
<comment type="disruption phenotype">
    <text evidence="4 5 6">Viable but female sterile (PubMed:18266476). Females lay weakly ventralized eggs that fail to hatch (PubMed:18266476). Induced sensitivity to DNA damage induced by irradiation or treatment with hydroxyurea/ Repair by homologous recombination is dramatically decreased (PubMed:17822964, PubMed:18266476). Instead, large flanking deletions are formed, and repair by the non-conservative single-strand annealing pathway predominates (PubMed:17822964, PubMed:18266476). When combined with disruption of Hus1 females do not lay eggs and have reduced size ovaries with apoptotic egg chambers (PubMed:19501158).</text>
</comment>
<comment type="sequence caution" evidence="10">
    <conflict type="erroneous initiation">
        <sequence resource="EMBL-CDS" id="AAM51132"/>
    </conflict>
</comment>
<name>BRCA2_DROME</name>
<organism>
    <name type="scientific">Drosophila melanogaster</name>
    <name type="common">Fruit fly</name>
    <dbReference type="NCBI Taxonomy" id="7227"/>
    <lineage>
        <taxon>Eukaryota</taxon>
        <taxon>Metazoa</taxon>
        <taxon>Ecdysozoa</taxon>
        <taxon>Arthropoda</taxon>
        <taxon>Hexapoda</taxon>
        <taxon>Insecta</taxon>
        <taxon>Pterygota</taxon>
        <taxon>Neoptera</taxon>
        <taxon>Endopterygota</taxon>
        <taxon>Diptera</taxon>
        <taxon>Brachycera</taxon>
        <taxon>Muscomorpha</taxon>
        <taxon>Ephydroidea</taxon>
        <taxon>Drosophilidae</taxon>
        <taxon>Drosophila</taxon>
        <taxon>Sophophora</taxon>
    </lineage>
</organism>
<reference evidence="11" key="1">
    <citation type="journal article" date="2000" name="Science">
        <title>The genome sequence of Drosophila melanogaster.</title>
        <authorList>
            <person name="Adams M.D."/>
            <person name="Celniker S.E."/>
            <person name="Holt R.A."/>
            <person name="Evans C.A."/>
            <person name="Gocayne J.D."/>
            <person name="Amanatides P.G."/>
            <person name="Scherer S.E."/>
            <person name="Li P.W."/>
            <person name="Hoskins R.A."/>
            <person name="Galle R.F."/>
            <person name="George R.A."/>
            <person name="Lewis S.E."/>
            <person name="Richards S."/>
            <person name="Ashburner M."/>
            <person name="Henderson S.N."/>
            <person name="Sutton G.G."/>
            <person name="Wortman J.R."/>
            <person name="Yandell M.D."/>
            <person name="Zhang Q."/>
            <person name="Chen L.X."/>
            <person name="Brandon R.C."/>
            <person name="Rogers Y.-H.C."/>
            <person name="Blazej R.G."/>
            <person name="Champe M."/>
            <person name="Pfeiffer B.D."/>
            <person name="Wan K.H."/>
            <person name="Doyle C."/>
            <person name="Baxter E.G."/>
            <person name="Helt G."/>
            <person name="Nelson C.R."/>
            <person name="Miklos G.L.G."/>
            <person name="Abril J.F."/>
            <person name="Agbayani A."/>
            <person name="An H.-J."/>
            <person name="Andrews-Pfannkoch C."/>
            <person name="Baldwin D."/>
            <person name="Ballew R.M."/>
            <person name="Basu A."/>
            <person name="Baxendale J."/>
            <person name="Bayraktaroglu L."/>
            <person name="Beasley E.M."/>
            <person name="Beeson K.Y."/>
            <person name="Benos P.V."/>
            <person name="Berman B.P."/>
            <person name="Bhandari D."/>
            <person name="Bolshakov S."/>
            <person name="Borkova D."/>
            <person name="Botchan M.R."/>
            <person name="Bouck J."/>
            <person name="Brokstein P."/>
            <person name="Brottier P."/>
            <person name="Burtis K.C."/>
            <person name="Busam D.A."/>
            <person name="Butler H."/>
            <person name="Cadieu E."/>
            <person name="Center A."/>
            <person name="Chandra I."/>
            <person name="Cherry J.M."/>
            <person name="Cawley S."/>
            <person name="Dahlke C."/>
            <person name="Davenport L.B."/>
            <person name="Davies P."/>
            <person name="de Pablos B."/>
            <person name="Delcher A."/>
            <person name="Deng Z."/>
            <person name="Mays A.D."/>
            <person name="Dew I."/>
            <person name="Dietz S.M."/>
            <person name="Dodson K."/>
            <person name="Doup L.E."/>
            <person name="Downes M."/>
            <person name="Dugan-Rocha S."/>
            <person name="Dunkov B.C."/>
            <person name="Dunn P."/>
            <person name="Durbin K.J."/>
            <person name="Evangelista C.C."/>
            <person name="Ferraz C."/>
            <person name="Ferriera S."/>
            <person name="Fleischmann W."/>
            <person name="Fosler C."/>
            <person name="Gabrielian A.E."/>
            <person name="Garg N.S."/>
            <person name="Gelbart W.M."/>
            <person name="Glasser K."/>
            <person name="Glodek A."/>
            <person name="Gong F."/>
            <person name="Gorrell J.H."/>
            <person name="Gu Z."/>
            <person name="Guan P."/>
            <person name="Harris M."/>
            <person name="Harris N.L."/>
            <person name="Harvey D.A."/>
            <person name="Heiman T.J."/>
            <person name="Hernandez J.R."/>
            <person name="Houck J."/>
            <person name="Hostin D."/>
            <person name="Houston K.A."/>
            <person name="Howland T.J."/>
            <person name="Wei M.-H."/>
            <person name="Ibegwam C."/>
            <person name="Jalali M."/>
            <person name="Kalush F."/>
            <person name="Karpen G.H."/>
            <person name="Ke Z."/>
            <person name="Kennison J.A."/>
            <person name="Ketchum K.A."/>
            <person name="Kimmel B.E."/>
            <person name="Kodira C.D."/>
            <person name="Kraft C.L."/>
            <person name="Kravitz S."/>
            <person name="Kulp D."/>
            <person name="Lai Z."/>
            <person name="Lasko P."/>
            <person name="Lei Y."/>
            <person name="Levitsky A.A."/>
            <person name="Li J.H."/>
            <person name="Li Z."/>
            <person name="Liang Y."/>
            <person name="Lin X."/>
            <person name="Liu X."/>
            <person name="Mattei B."/>
            <person name="McIntosh T.C."/>
            <person name="McLeod M.P."/>
            <person name="McPherson D."/>
            <person name="Merkulov G."/>
            <person name="Milshina N.V."/>
            <person name="Mobarry C."/>
            <person name="Morris J."/>
            <person name="Moshrefi A."/>
            <person name="Mount S.M."/>
            <person name="Moy M."/>
            <person name="Murphy B."/>
            <person name="Murphy L."/>
            <person name="Muzny D.M."/>
            <person name="Nelson D.L."/>
            <person name="Nelson D.R."/>
            <person name="Nelson K.A."/>
            <person name="Nixon K."/>
            <person name="Nusskern D.R."/>
            <person name="Pacleb J.M."/>
            <person name="Palazzolo M."/>
            <person name="Pittman G.S."/>
            <person name="Pan S."/>
            <person name="Pollard J."/>
            <person name="Puri V."/>
            <person name="Reese M.G."/>
            <person name="Reinert K."/>
            <person name="Remington K."/>
            <person name="Saunders R.D.C."/>
            <person name="Scheeler F."/>
            <person name="Shen H."/>
            <person name="Shue B.C."/>
            <person name="Siden-Kiamos I."/>
            <person name="Simpson M."/>
            <person name="Skupski M.P."/>
            <person name="Smith T.J."/>
            <person name="Spier E."/>
            <person name="Spradling A.C."/>
            <person name="Stapleton M."/>
            <person name="Strong R."/>
            <person name="Sun E."/>
            <person name="Svirskas R."/>
            <person name="Tector C."/>
            <person name="Turner R."/>
            <person name="Venter E."/>
            <person name="Wang A.H."/>
            <person name="Wang X."/>
            <person name="Wang Z.-Y."/>
            <person name="Wassarman D.A."/>
            <person name="Weinstock G.M."/>
            <person name="Weissenbach J."/>
            <person name="Williams S.M."/>
            <person name="Woodage T."/>
            <person name="Worley K.C."/>
            <person name="Wu D."/>
            <person name="Yang S."/>
            <person name="Yao Q.A."/>
            <person name="Ye J."/>
            <person name="Yeh R.-F."/>
            <person name="Zaveri J.S."/>
            <person name="Zhan M."/>
            <person name="Zhang G."/>
            <person name="Zhao Q."/>
            <person name="Zheng L."/>
            <person name="Zheng X.H."/>
            <person name="Zhong F.N."/>
            <person name="Zhong W."/>
            <person name="Zhou X."/>
            <person name="Zhu S.C."/>
            <person name="Zhu X."/>
            <person name="Smith H.O."/>
            <person name="Gibbs R.A."/>
            <person name="Myers E.W."/>
            <person name="Rubin G.M."/>
            <person name="Venter J.C."/>
        </authorList>
    </citation>
    <scope>NUCLEOTIDE SEQUENCE [LARGE SCALE GENOMIC DNA]</scope>
    <source>
        <strain>Berkeley</strain>
    </source>
</reference>
<reference evidence="10 11" key="2">
    <citation type="journal article" date="2002" name="Genome Biol.">
        <title>Annotation of the Drosophila melanogaster euchromatic genome: a systematic review.</title>
        <authorList>
            <person name="Misra S."/>
            <person name="Crosby M.A."/>
            <person name="Mungall C.J."/>
            <person name="Matthews B.B."/>
            <person name="Campbell K.S."/>
            <person name="Hradecky P."/>
            <person name="Huang Y."/>
            <person name="Kaminker J.S."/>
            <person name="Millburn G.H."/>
            <person name="Prochnik S.E."/>
            <person name="Smith C.D."/>
            <person name="Tupy J.L."/>
            <person name="Whitfield E.J."/>
            <person name="Bayraktaroglu L."/>
            <person name="Berman B.P."/>
            <person name="Bettencourt B.R."/>
            <person name="Celniker S.E."/>
            <person name="de Grey A.D.N.J."/>
            <person name="Drysdale R.A."/>
            <person name="Harris N.L."/>
            <person name="Richter J."/>
            <person name="Russo S."/>
            <person name="Schroeder A.J."/>
            <person name="Shu S.Q."/>
            <person name="Stapleton M."/>
            <person name="Yamada C."/>
            <person name="Ashburner M."/>
            <person name="Gelbart W.M."/>
            <person name="Rubin G.M."/>
            <person name="Lewis S.E."/>
        </authorList>
    </citation>
    <scope>GENOME REANNOTATION</scope>
    <source>
        <strain>Berkeley</strain>
    </source>
</reference>
<reference evidence="13" key="3">
    <citation type="submission" date="2005-08" db="EMBL/GenBank/DDBJ databases">
        <authorList>
            <person name="Stapleton M."/>
            <person name="Carlson J.W."/>
            <person name="Chavez C."/>
            <person name="Frise E."/>
            <person name="George R.A."/>
            <person name="Pacleb J.M."/>
            <person name="Park S."/>
            <person name="Wan K.H."/>
            <person name="Yu C."/>
            <person name="Celniker S.E."/>
        </authorList>
    </citation>
    <scope>NUCLEOTIDE SEQUENCE [LARGE SCALE MRNA]</scope>
    <source>
        <strain evidence="13">Berkeley</strain>
        <tissue>Larva</tissue>
        <tissue>Pupae</tissue>
    </source>
</reference>
<reference evidence="10 15" key="4">
    <citation type="journal article" date="2008" name="Dros. Info. Service">
        <title>Disruption of Drosophila melanogaster dmbrca2 (CG30169) affects rates of female meiotic crossing over.</title>
        <authorList>
            <person name="Barnwell C.V."/>
            <person name="Kommaraju K.R."/>
            <person name="Noor M.A."/>
        </authorList>
    </citation>
    <scope>NUCLEOTIDE SEQUENCE [GENOMIC DNA] OF 234-278</scope>
    <scope>VARIANT LYS-242</scope>
    <source>
        <strain evidence="14">Oregon-R</strain>
        <strain evidence="15">Zimbabwe30</strain>
    </source>
</reference>
<reference evidence="10 12" key="5">
    <citation type="journal article" date="2002" name="Genome Biol.">
        <title>A Drosophila full-length cDNA resource.</title>
        <authorList>
            <person name="Stapleton M."/>
            <person name="Carlson J.W."/>
            <person name="Brokstein P."/>
            <person name="Yu C."/>
            <person name="Champe M."/>
            <person name="George R.A."/>
            <person name="Guarin H."/>
            <person name="Kronmiller B."/>
            <person name="Pacleb J.M."/>
            <person name="Park S."/>
            <person name="Wan K.H."/>
            <person name="Rubin G.M."/>
            <person name="Celniker S.E."/>
        </authorList>
    </citation>
    <scope>NUCLEOTIDE SEQUENCE [LARGE SCALE MRNA] OF 276-971</scope>
    <source>
        <strain evidence="3">Berkeley</strain>
        <tissue evidence="3">Embryo</tissue>
    </source>
</reference>
<reference evidence="10" key="6">
    <citation type="journal article" date="2008" name="DNA Repair">
        <title>Functional analysis of Drosophila melanogaster BRCA2 in DNA repair.</title>
        <authorList>
            <person name="Brough R."/>
            <person name="Wei D."/>
            <person name="Leulier S."/>
            <person name="Lord C.J."/>
            <person name="Rong Y.S."/>
            <person name="Ashworth A."/>
        </authorList>
    </citation>
    <scope>FUNCTION</scope>
    <scope>INTERACTION WITH SPN-A</scope>
    <scope>SUBCELLULAR LOCATION</scope>
    <scope>DISRUPTION PHENOTYPE</scope>
</reference>
<reference evidence="10" key="7">
    <citation type="journal article" date="2008" name="PLoS Genet.">
        <title>Drosophila brca2 is required for mitotic and meiotic DNA repair and efficient activation of the meiotic recombination checkpoint.</title>
        <authorList>
            <person name="Klovstad M."/>
            <person name="Abdu U."/>
            <person name="Schupbach T."/>
        </authorList>
    </citation>
    <scope>FUNCTION</scope>
    <scope>INTERACTION WITH RAD9</scope>
    <scope>DISRUPTION PHENOTYPE</scope>
</reference>
<reference key="8">
    <citation type="journal article" date="2009" name="Mech. Dev.">
        <title>The Drosophila hus1 gene is required for homologous recombination repair during meiosis.</title>
        <authorList>
            <person name="Peretz G."/>
            <person name="Arie L.G."/>
            <person name="Bakhrat A."/>
            <person name="Abdu U."/>
        </authorList>
    </citation>
    <scope>DISRUPTION PHENOTYPE</scope>
</reference>
<reference key="9">
    <citation type="journal article" date="2012" name="J. Cell Sci.">
        <title>Cyclin G is involved in meiotic recombination repair in Drosophila melanogaster.</title>
        <authorList>
            <person name="Nagel A.C."/>
            <person name="Fischer P."/>
            <person name="Szawinski J."/>
            <person name="La Rosa M.K."/>
            <person name="Preiss A."/>
        </authorList>
    </citation>
    <scope>INTERACTION WITH CYCG</scope>
</reference>
<evidence type="ECO:0000255" key="1">
    <source>
        <dbReference type="PROSITE-ProRule" id="PRU00032"/>
    </source>
</evidence>
<evidence type="ECO:0000256" key="2">
    <source>
        <dbReference type="SAM" id="MobiDB-lite"/>
    </source>
</evidence>
<evidence type="ECO:0000269" key="3">
    <source>
    </source>
</evidence>
<evidence type="ECO:0000269" key="4">
    <source>
    </source>
</evidence>
<evidence type="ECO:0000269" key="5">
    <source>
    </source>
</evidence>
<evidence type="ECO:0000269" key="6">
    <source>
    </source>
</evidence>
<evidence type="ECO:0000269" key="7">
    <source>
    </source>
</evidence>
<evidence type="ECO:0000269" key="8">
    <source ref="4"/>
</evidence>
<evidence type="ECO:0000303" key="9">
    <source>
    </source>
</evidence>
<evidence type="ECO:0000305" key="10"/>
<evidence type="ECO:0000312" key="11">
    <source>
        <dbReference type="EMBL" id="AAF47220.3"/>
    </source>
</evidence>
<evidence type="ECO:0000312" key="12">
    <source>
        <dbReference type="EMBL" id="AAM51132.1"/>
    </source>
</evidence>
<evidence type="ECO:0000312" key="13">
    <source>
        <dbReference type="EMBL" id="AAZ66318.1"/>
    </source>
</evidence>
<evidence type="ECO:0000312" key="14">
    <source>
        <dbReference type="EMBL" id="ACB30270.1"/>
    </source>
</evidence>
<evidence type="ECO:0000312" key="15">
    <source>
        <dbReference type="EMBL" id="ACB30271.1"/>
    </source>
</evidence>
<evidence type="ECO:0000312" key="16">
    <source>
        <dbReference type="FlyBase" id="FBgn0050169"/>
    </source>
</evidence>
<accession>Q9W157</accession>
<accession>B2CPK7</accession>
<accession>B2CPK8</accession>
<accession>Q494G5</accession>
<accession>Q8MRU0</accession>
<dbReference type="EMBL" id="AE013599">
    <property type="protein sequence ID" value="AAF47220.3"/>
    <property type="molecule type" value="Genomic_DNA"/>
</dbReference>
<dbReference type="EMBL" id="BT023811">
    <property type="protein sequence ID" value="AAZ66318.1"/>
    <property type="molecule type" value="mRNA"/>
</dbReference>
<dbReference type="EMBL" id="EU541213">
    <property type="protein sequence ID" value="ACB30270.1"/>
    <property type="molecule type" value="Genomic_DNA"/>
</dbReference>
<dbReference type="EMBL" id="EU541214">
    <property type="protein sequence ID" value="ACB30271.1"/>
    <property type="molecule type" value="Genomic_DNA"/>
</dbReference>
<dbReference type="EMBL" id="AY119272">
    <property type="protein sequence ID" value="AAM51132.1"/>
    <property type="status" value="ALT_INIT"/>
    <property type="molecule type" value="mRNA"/>
</dbReference>
<dbReference type="RefSeq" id="NP_611925.2">
    <property type="nucleotide sequence ID" value="NM_138081.4"/>
</dbReference>
<dbReference type="BioGRID" id="63488">
    <property type="interactions" value="25"/>
</dbReference>
<dbReference type="FunCoup" id="Q9W157">
    <property type="interactions" value="429"/>
</dbReference>
<dbReference type="IntAct" id="Q9W157">
    <property type="interactions" value="8"/>
</dbReference>
<dbReference type="MINT" id="Q9W157"/>
<dbReference type="STRING" id="7227.FBpp0072209"/>
<dbReference type="GlyGen" id="Q9W157">
    <property type="glycosylation" value="2 sites"/>
</dbReference>
<dbReference type="PaxDb" id="7227-FBpp0072209"/>
<dbReference type="DNASU" id="37916"/>
<dbReference type="EnsemblMetazoa" id="FBtr0072302">
    <property type="protein sequence ID" value="FBpp0072209"/>
    <property type="gene ID" value="FBgn0050169"/>
</dbReference>
<dbReference type="GeneID" id="37916"/>
<dbReference type="KEGG" id="dme:Dmel_CG30169"/>
<dbReference type="UCSC" id="CG30169-RA">
    <property type="organism name" value="d. melanogaster"/>
</dbReference>
<dbReference type="AGR" id="FB:FBgn0050169"/>
<dbReference type="CTD" id="675"/>
<dbReference type="FlyBase" id="FBgn0050169">
    <property type="gene designation" value="Brca2"/>
</dbReference>
<dbReference type="VEuPathDB" id="VectorBase:FBgn0050169"/>
<dbReference type="eggNOG" id="KOG4751">
    <property type="taxonomic scope" value="Eukaryota"/>
</dbReference>
<dbReference type="HOGENOM" id="CLU_315529_0_0_1"/>
<dbReference type="InParanoid" id="Q9W157"/>
<dbReference type="OMA" id="ECFSEDM"/>
<dbReference type="OrthoDB" id="21095at2759"/>
<dbReference type="PhylomeDB" id="Q9W157"/>
<dbReference type="SignaLink" id="Q9W157"/>
<dbReference type="BioGRID-ORCS" id="37916">
    <property type="hits" value="0 hits in 1 CRISPR screen"/>
</dbReference>
<dbReference type="GenomeRNAi" id="37916"/>
<dbReference type="PRO" id="PR:Q9W157"/>
<dbReference type="Proteomes" id="UP000000803">
    <property type="component" value="Chromosome 2R"/>
</dbReference>
<dbReference type="Bgee" id="FBgn0050169">
    <property type="expression patterns" value="Expressed in adult oenocyte (Drosophila) in body wall and 48 other cell types or tissues"/>
</dbReference>
<dbReference type="GO" id="GO:0005634">
    <property type="term" value="C:nucleus"/>
    <property type="evidence" value="ECO:0000314"/>
    <property type="project" value="UniProtKB"/>
</dbReference>
<dbReference type="GO" id="GO:0051301">
    <property type="term" value="P:cell division"/>
    <property type="evidence" value="ECO:0007669"/>
    <property type="project" value="UniProtKB-KW"/>
</dbReference>
<dbReference type="GO" id="GO:0006281">
    <property type="term" value="P:DNA repair"/>
    <property type="evidence" value="ECO:0000314"/>
    <property type="project" value="FlyBase"/>
</dbReference>
<dbReference type="GO" id="GO:0043150">
    <property type="term" value="P:DNA synthesis involved in double-strand break repair via homologous recombination"/>
    <property type="evidence" value="ECO:0000315"/>
    <property type="project" value="UniProtKB"/>
</dbReference>
<dbReference type="GO" id="GO:0000724">
    <property type="term" value="P:double-strand break repair via homologous recombination"/>
    <property type="evidence" value="ECO:0000315"/>
    <property type="project" value="FlyBase"/>
</dbReference>
<dbReference type="GO" id="GO:0010778">
    <property type="term" value="P:meiotic DNA repair synthesis involved in reciprocal meiotic recombination"/>
    <property type="evidence" value="ECO:0000315"/>
    <property type="project" value="UniProtKB"/>
</dbReference>
<dbReference type="GO" id="GO:0051598">
    <property type="term" value="P:meiotic recombination checkpoint signaling"/>
    <property type="evidence" value="ECO:0000315"/>
    <property type="project" value="UniProtKB"/>
</dbReference>
<dbReference type="GO" id="GO:1901563">
    <property type="term" value="P:response to camptothecin"/>
    <property type="evidence" value="ECO:0000315"/>
    <property type="project" value="FlyBase"/>
</dbReference>
<dbReference type="InterPro" id="IPR015525">
    <property type="entry name" value="BRCA2"/>
</dbReference>
<dbReference type="InterPro" id="IPR002093">
    <property type="entry name" value="BRCA2_repeat"/>
</dbReference>
<dbReference type="PANTHER" id="PTHR11289:SF0">
    <property type="entry name" value="BREAST CANCER TYPE 2 SUSCEPTIBILITY PROTEIN"/>
    <property type="match status" value="1"/>
</dbReference>
<dbReference type="PANTHER" id="PTHR11289">
    <property type="entry name" value="BREAST CANCER TYPE 2 SUSCEPTIBILITY PROTEIN BRCA2"/>
    <property type="match status" value="1"/>
</dbReference>
<dbReference type="PROSITE" id="PS50138">
    <property type="entry name" value="BRCA2_REPEAT"/>
    <property type="match status" value="2"/>
</dbReference>
<keyword id="KW-0131">Cell cycle</keyword>
<keyword id="KW-0132">Cell division</keyword>
<keyword id="KW-0227">DNA damage</keyword>
<keyword id="KW-0234">DNA repair</keyword>
<keyword id="KW-0469">Meiosis</keyword>
<keyword id="KW-0498">Mitosis</keyword>
<keyword id="KW-0539">Nucleus</keyword>
<keyword id="KW-1185">Reference proteome</keyword>
<keyword id="KW-0677">Repeat</keyword>